<sequence length="105" mass="11877">MNTLFGKAKEEARVISPKSVDEYPEAPITLGTTLVNFTGDWRTFMPVIDESKCVKCYICWKFCPEPAIYIKEDGFVAIDYDYCKGCGICANECPTKAITMVREEK</sequence>
<proteinExistence type="inferred from homology"/>
<comment type="catalytic activity">
    <reaction>
        <text>3-methyl-2-oxobutanoate + 2 oxidized [2Fe-2S]-[ferredoxin] + CoA = 2-methylpropanoyl-CoA + 2 reduced [2Fe-2S]-[ferredoxin] + CO2 + H(+)</text>
        <dbReference type="Rhea" id="RHEA:11712"/>
        <dbReference type="Rhea" id="RHEA-COMP:10000"/>
        <dbReference type="Rhea" id="RHEA-COMP:10001"/>
        <dbReference type="ChEBI" id="CHEBI:11851"/>
        <dbReference type="ChEBI" id="CHEBI:15378"/>
        <dbReference type="ChEBI" id="CHEBI:16526"/>
        <dbReference type="ChEBI" id="CHEBI:33737"/>
        <dbReference type="ChEBI" id="CHEBI:33738"/>
        <dbReference type="ChEBI" id="CHEBI:57287"/>
        <dbReference type="ChEBI" id="CHEBI:57338"/>
        <dbReference type="EC" id="1.2.7.7"/>
    </reaction>
</comment>
<comment type="cofactor">
    <cofactor evidence="1">
        <name>[4Fe-4S] cluster</name>
        <dbReference type="ChEBI" id="CHEBI:49883"/>
    </cofactor>
    <text evidence="1">Binds 2 [4Fe-4S] clusters.</text>
</comment>
<comment type="subunit">
    <text evidence="1">Heterotetramer of one alpha, one beta, one delta and one gamma chain.</text>
</comment>
<accession>Q9UYZ0</accession>
<accession>G8ZHH3</accession>
<protein>
    <recommendedName>
        <fullName>Ketoisovalerate oxidoreductase subunit VorD</fullName>
        <shortName>VOR</shortName>
        <ecNumber>1.2.7.7</ecNumber>
    </recommendedName>
    <alternativeName>
        <fullName>2-oxoisovalerate ferredoxin reductase subunit delta</fullName>
    </alternativeName>
    <alternativeName>
        <fullName>2-oxoisovalerate oxidoreductase delta chain</fullName>
    </alternativeName>
</protein>
<keyword id="KW-0004">4Fe-4S</keyword>
<keyword id="KW-0249">Electron transport</keyword>
<keyword id="KW-0408">Iron</keyword>
<keyword id="KW-0411">Iron-sulfur</keyword>
<keyword id="KW-0479">Metal-binding</keyword>
<keyword id="KW-0560">Oxidoreductase</keyword>
<keyword id="KW-0677">Repeat</keyword>
<keyword id="KW-0813">Transport</keyword>
<evidence type="ECO:0000250" key="1"/>
<evidence type="ECO:0000255" key="2"/>
<evidence type="ECO:0000255" key="3">
    <source>
        <dbReference type="PROSITE-ProRule" id="PRU00711"/>
    </source>
</evidence>
<gene>
    <name type="primary">vorD</name>
    <name type="ordered locus">PYRAB13670</name>
    <name type="ORF">PAB1471</name>
</gene>
<dbReference type="EC" id="1.2.7.7"/>
<dbReference type="EMBL" id="AJ248287">
    <property type="protein sequence ID" value="CAB50272.1"/>
    <property type="molecule type" value="Genomic_DNA"/>
</dbReference>
<dbReference type="EMBL" id="HE613800">
    <property type="protein sequence ID" value="CCE70810.1"/>
    <property type="molecule type" value="Genomic_DNA"/>
</dbReference>
<dbReference type="PIR" id="C75047">
    <property type="entry name" value="C75047"/>
</dbReference>
<dbReference type="RefSeq" id="WP_010868482.1">
    <property type="nucleotide sequence ID" value="NC_000868.1"/>
</dbReference>
<dbReference type="SMR" id="Q9UYZ0"/>
<dbReference type="STRING" id="272844.PAB1471"/>
<dbReference type="KEGG" id="pab:PAB1471"/>
<dbReference type="PATRIC" id="fig|272844.11.peg.1453"/>
<dbReference type="eggNOG" id="arCOG01605">
    <property type="taxonomic scope" value="Archaea"/>
</dbReference>
<dbReference type="HOGENOM" id="CLU_139698_1_1_2"/>
<dbReference type="OrthoDB" id="23478at2157"/>
<dbReference type="PhylomeDB" id="Q9UYZ0"/>
<dbReference type="Proteomes" id="UP000000810">
    <property type="component" value="Chromosome"/>
</dbReference>
<dbReference type="Proteomes" id="UP000009139">
    <property type="component" value="Chromosome"/>
</dbReference>
<dbReference type="GO" id="GO:0043807">
    <property type="term" value="F:3-methyl-2-oxobutanoate dehydrogenase (ferredoxin) activity"/>
    <property type="evidence" value="ECO:0007669"/>
    <property type="project" value="UniProtKB-EC"/>
</dbReference>
<dbReference type="GO" id="GO:0051539">
    <property type="term" value="F:4 iron, 4 sulfur cluster binding"/>
    <property type="evidence" value="ECO:0007669"/>
    <property type="project" value="UniProtKB-KW"/>
</dbReference>
<dbReference type="GO" id="GO:0046872">
    <property type="term" value="F:metal ion binding"/>
    <property type="evidence" value="ECO:0007669"/>
    <property type="project" value="UniProtKB-KW"/>
</dbReference>
<dbReference type="Gene3D" id="3.30.70.20">
    <property type="match status" value="2"/>
</dbReference>
<dbReference type="InterPro" id="IPR017896">
    <property type="entry name" value="4Fe4S_Fe-S-bd"/>
</dbReference>
<dbReference type="InterPro" id="IPR017900">
    <property type="entry name" value="4Fe4S_Fe_S_CS"/>
</dbReference>
<dbReference type="InterPro" id="IPR011898">
    <property type="entry name" value="PorD_KorD"/>
</dbReference>
<dbReference type="NCBIfam" id="TIGR02179">
    <property type="entry name" value="PorD_KorD"/>
    <property type="match status" value="1"/>
</dbReference>
<dbReference type="NCBIfam" id="NF007202">
    <property type="entry name" value="PRK09623.1"/>
    <property type="match status" value="1"/>
</dbReference>
<dbReference type="PANTHER" id="PTHR43724">
    <property type="entry name" value="PYRUVATE SYNTHASE SUBUNIT PORD"/>
    <property type="match status" value="1"/>
</dbReference>
<dbReference type="PANTHER" id="PTHR43724:SF1">
    <property type="entry name" value="PYRUVATE SYNTHASE SUBUNIT PORD"/>
    <property type="match status" value="1"/>
</dbReference>
<dbReference type="Pfam" id="PF14697">
    <property type="entry name" value="Fer4_21"/>
    <property type="match status" value="1"/>
</dbReference>
<dbReference type="SUPFAM" id="SSF54862">
    <property type="entry name" value="4Fe-4S ferredoxins"/>
    <property type="match status" value="1"/>
</dbReference>
<dbReference type="PROSITE" id="PS00198">
    <property type="entry name" value="4FE4S_FER_1"/>
    <property type="match status" value="2"/>
</dbReference>
<dbReference type="PROSITE" id="PS51379">
    <property type="entry name" value="4FE4S_FER_2"/>
    <property type="match status" value="2"/>
</dbReference>
<name>VORD_PYRAB</name>
<reference key="1">
    <citation type="journal article" date="2003" name="Mol. Microbiol.">
        <title>An integrated analysis of the genome of the hyperthermophilic archaeon Pyrococcus abyssi.</title>
        <authorList>
            <person name="Cohen G.N."/>
            <person name="Barbe V."/>
            <person name="Flament D."/>
            <person name="Galperin M."/>
            <person name="Heilig R."/>
            <person name="Lecompte O."/>
            <person name="Poch O."/>
            <person name="Prieur D."/>
            <person name="Querellou J."/>
            <person name="Ripp R."/>
            <person name="Thierry J.-C."/>
            <person name="Van der Oost J."/>
            <person name="Weissenbach J."/>
            <person name="Zivanovic Y."/>
            <person name="Forterre P."/>
        </authorList>
    </citation>
    <scope>NUCLEOTIDE SEQUENCE [LARGE SCALE GENOMIC DNA]</scope>
    <source>
        <strain>GE5 / Orsay</strain>
    </source>
</reference>
<reference key="2">
    <citation type="journal article" date="2012" name="Curr. Microbiol.">
        <title>Re-annotation of two hyperthermophilic archaea Pyrococcus abyssi GE5 and Pyrococcus furiosus DSM 3638.</title>
        <authorList>
            <person name="Gao J."/>
            <person name="Wang J."/>
        </authorList>
    </citation>
    <scope>GENOME REANNOTATION</scope>
    <source>
        <strain>GE5 / Orsay</strain>
    </source>
</reference>
<organism>
    <name type="scientific">Pyrococcus abyssi (strain GE5 / Orsay)</name>
    <dbReference type="NCBI Taxonomy" id="272844"/>
    <lineage>
        <taxon>Archaea</taxon>
        <taxon>Methanobacteriati</taxon>
        <taxon>Methanobacteriota</taxon>
        <taxon>Thermococci</taxon>
        <taxon>Thermococcales</taxon>
        <taxon>Thermococcaceae</taxon>
        <taxon>Pyrococcus</taxon>
    </lineage>
</organism>
<feature type="chain" id="PRO_0000099961" description="Ketoisovalerate oxidoreductase subunit VorD">
    <location>
        <begin position="1"/>
        <end position="105"/>
    </location>
</feature>
<feature type="domain" description="4Fe-4S ferredoxin-type 1" evidence="3">
    <location>
        <begin position="44"/>
        <end position="73"/>
    </location>
</feature>
<feature type="domain" description="4Fe-4S ferredoxin-type 2" evidence="3">
    <location>
        <begin position="74"/>
        <end position="103"/>
    </location>
</feature>
<feature type="binding site" evidence="2">
    <location>
        <position position="53"/>
    </location>
    <ligand>
        <name>[4Fe-4S] cluster</name>
        <dbReference type="ChEBI" id="CHEBI:49883"/>
        <label>1</label>
    </ligand>
</feature>
<feature type="binding site" evidence="2">
    <location>
        <position position="56"/>
    </location>
    <ligand>
        <name>[4Fe-4S] cluster</name>
        <dbReference type="ChEBI" id="CHEBI:49883"/>
        <label>1</label>
    </ligand>
</feature>
<feature type="binding site" evidence="2">
    <location>
        <position position="59"/>
    </location>
    <ligand>
        <name>[4Fe-4S] cluster</name>
        <dbReference type="ChEBI" id="CHEBI:49883"/>
        <label>1</label>
    </ligand>
</feature>
<feature type="binding site" evidence="2">
    <location>
        <position position="63"/>
    </location>
    <ligand>
        <name>[4Fe-4S] cluster</name>
        <dbReference type="ChEBI" id="CHEBI:49883"/>
        <label>2</label>
    </ligand>
</feature>
<feature type="binding site" evidence="2">
    <location>
        <position position="83"/>
    </location>
    <ligand>
        <name>[4Fe-4S] cluster</name>
        <dbReference type="ChEBI" id="CHEBI:49883"/>
        <label>2</label>
    </ligand>
</feature>
<feature type="binding site" evidence="2">
    <location>
        <position position="86"/>
    </location>
    <ligand>
        <name>[4Fe-4S] cluster</name>
        <dbReference type="ChEBI" id="CHEBI:49883"/>
        <label>2</label>
    </ligand>
</feature>
<feature type="binding site" evidence="2">
    <location>
        <position position="89"/>
    </location>
    <ligand>
        <name>[4Fe-4S] cluster</name>
        <dbReference type="ChEBI" id="CHEBI:49883"/>
        <label>2</label>
    </ligand>
</feature>
<feature type="binding site" evidence="2">
    <location>
        <position position="93"/>
    </location>
    <ligand>
        <name>[4Fe-4S] cluster</name>
        <dbReference type="ChEBI" id="CHEBI:49883"/>
        <label>1</label>
    </ligand>
</feature>